<keyword id="KW-0067">ATP-binding</keyword>
<keyword id="KW-1003">Cell membrane</keyword>
<keyword id="KW-0325">Glycoprotein</keyword>
<keyword id="KW-0433">Leucine-rich repeat</keyword>
<keyword id="KW-0472">Membrane</keyword>
<keyword id="KW-0547">Nucleotide-binding</keyword>
<keyword id="KW-0597">Phosphoprotein</keyword>
<keyword id="KW-0675">Receptor</keyword>
<keyword id="KW-1185">Reference proteome</keyword>
<keyword id="KW-0677">Repeat</keyword>
<keyword id="KW-0732">Signal</keyword>
<keyword id="KW-0812">Transmembrane</keyword>
<keyword id="KW-1133">Transmembrane helix</keyword>
<proteinExistence type="evidence at transcript level"/>
<reference key="1">
    <citation type="journal article" date="2000" name="Nature">
        <title>Sequence and analysis of chromosome 1 of the plant Arabidopsis thaliana.</title>
        <authorList>
            <person name="Theologis A."/>
            <person name="Ecker J.R."/>
            <person name="Palm C.J."/>
            <person name="Federspiel N.A."/>
            <person name="Kaul S."/>
            <person name="White O."/>
            <person name="Alonso J."/>
            <person name="Altafi H."/>
            <person name="Araujo R."/>
            <person name="Bowman C.L."/>
            <person name="Brooks S.Y."/>
            <person name="Buehler E."/>
            <person name="Chan A."/>
            <person name="Chao Q."/>
            <person name="Chen H."/>
            <person name="Cheuk R.F."/>
            <person name="Chin C.W."/>
            <person name="Chung M.K."/>
            <person name="Conn L."/>
            <person name="Conway A.B."/>
            <person name="Conway A.R."/>
            <person name="Creasy T.H."/>
            <person name="Dewar K."/>
            <person name="Dunn P."/>
            <person name="Etgu P."/>
            <person name="Feldblyum T.V."/>
            <person name="Feng J.-D."/>
            <person name="Fong B."/>
            <person name="Fujii C.Y."/>
            <person name="Gill J.E."/>
            <person name="Goldsmith A.D."/>
            <person name="Haas B."/>
            <person name="Hansen N.F."/>
            <person name="Hughes B."/>
            <person name="Huizar L."/>
            <person name="Hunter J.L."/>
            <person name="Jenkins J."/>
            <person name="Johnson-Hopson C."/>
            <person name="Khan S."/>
            <person name="Khaykin E."/>
            <person name="Kim C.J."/>
            <person name="Koo H.L."/>
            <person name="Kremenetskaia I."/>
            <person name="Kurtz D.B."/>
            <person name="Kwan A."/>
            <person name="Lam B."/>
            <person name="Langin-Hooper S."/>
            <person name="Lee A."/>
            <person name="Lee J.M."/>
            <person name="Lenz C.A."/>
            <person name="Li J.H."/>
            <person name="Li Y.-P."/>
            <person name="Lin X."/>
            <person name="Liu S.X."/>
            <person name="Liu Z.A."/>
            <person name="Luros J.S."/>
            <person name="Maiti R."/>
            <person name="Marziali A."/>
            <person name="Militscher J."/>
            <person name="Miranda M."/>
            <person name="Nguyen M."/>
            <person name="Nierman W.C."/>
            <person name="Osborne B.I."/>
            <person name="Pai G."/>
            <person name="Peterson J."/>
            <person name="Pham P.K."/>
            <person name="Rizzo M."/>
            <person name="Rooney T."/>
            <person name="Rowley D."/>
            <person name="Sakano H."/>
            <person name="Salzberg S.L."/>
            <person name="Schwartz J.R."/>
            <person name="Shinn P."/>
            <person name="Southwick A.M."/>
            <person name="Sun H."/>
            <person name="Tallon L.J."/>
            <person name="Tambunga G."/>
            <person name="Toriumi M.J."/>
            <person name="Town C.D."/>
            <person name="Utterback T."/>
            <person name="Van Aken S."/>
            <person name="Vaysberg M."/>
            <person name="Vysotskaia V.S."/>
            <person name="Walker M."/>
            <person name="Wu D."/>
            <person name="Yu G."/>
            <person name="Fraser C.M."/>
            <person name="Venter J.C."/>
            <person name="Davis R.W."/>
        </authorList>
    </citation>
    <scope>NUCLEOTIDE SEQUENCE [LARGE SCALE GENOMIC DNA]</scope>
    <source>
        <strain>cv. Columbia</strain>
    </source>
</reference>
<reference key="2">
    <citation type="journal article" date="2017" name="Plant J.">
        <title>Araport11: a complete reannotation of the Arabidopsis thaliana reference genome.</title>
        <authorList>
            <person name="Cheng C.Y."/>
            <person name="Krishnakumar V."/>
            <person name="Chan A.P."/>
            <person name="Thibaud-Nissen F."/>
            <person name="Schobel S."/>
            <person name="Town C.D."/>
        </authorList>
    </citation>
    <scope>GENOME REANNOTATION</scope>
    <source>
        <strain>cv. Columbia</strain>
    </source>
</reference>
<reference key="3">
    <citation type="journal article" date="2003" name="Science">
        <title>Empirical analysis of transcriptional activity in the Arabidopsis genome.</title>
        <authorList>
            <person name="Yamada K."/>
            <person name="Lim J."/>
            <person name="Dale J.M."/>
            <person name="Chen H."/>
            <person name="Shinn P."/>
            <person name="Palm C.J."/>
            <person name="Southwick A.M."/>
            <person name="Wu H.C."/>
            <person name="Kim C.J."/>
            <person name="Nguyen M."/>
            <person name="Pham P.K."/>
            <person name="Cheuk R.F."/>
            <person name="Karlin-Newmann G."/>
            <person name="Liu S.X."/>
            <person name="Lam B."/>
            <person name="Sakano H."/>
            <person name="Wu T."/>
            <person name="Yu G."/>
            <person name="Miranda M."/>
            <person name="Quach H.L."/>
            <person name="Tripp M."/>
            <person name="Chang C.H."/>
            <person name="Lee J.M."/>
            <person name="Toriumi M.J."/>
            <person name="Chan M.M."/>
            <person name="Tang C.C."/>
            <person name="Onodera C.S."/>
            <person name="Deng J.M."/>
            <person name="Akiyama K."/>
            <person name="Ansari Y."/>
            <person name="Arakawa T."/>
            <person name="Banh J."/>
            <person name="Banno F."/>
            <person name="Bowser L."/>
            <person name="Brooks S.Y."/>
            <person name="Carninci P."/>
            <person name="Chao Q."/>
            <person name="Choy N."/>
            <person name="Enju A."/>
            <person name="Goldsmith A.D."/>
            <person name="Gurjal M."/>
            <person name="Hansen N.F."/>
            <person name="Hayashizaki Y."/>
            <person name="Johnson-Hopson C."/>
            <person name="Hsuan V.W."/>
            <person name="Iida K."/>
            <person name="Karnes M."/>
            <person name="Khan S."/>
            <person name="Koesema E."/>
            <person name="Ishida J."/>
            <person name="Jiang P.X."/>
            <person name="Jones T."/>
            <person name="Kawai J."/>
            <person name="Kamiya A."/>
            <person name="Meyers C."/>
            <person name="Nakajima M."/>
            <person name="Narusaka M."/>
            <person name="Seki M."/>
            <person name="Sakurai T."/>
            <person name="Satou M."/>
            <person name="Tamse R."/>
            <person name="Vaysberg M."/>
            <person name="Wallender E.K."/>
            <person name="Wong C."/>
            <person name="Yamamura Y."/>
            <person name="Yuan S."/>
            <person name="Shinozaki K."/>
            <person name="Davis R.W."/>
            <person name="Theologis A."/>
            <person name="Ecker J.R."/>
        </authorList>
    </citation>
    <scope>NUCLEOTIDE SEQUENCE [LARGE SCALE MRNA]</scope>
    <source>
        <strain>cv. Columbia</strain>
    </source>
</reference>
<reference key="4">
    <citation type="journal article" date="2010" name="BMC Genomics">
        <title>Genome-wide cloning and sequence analysis of leucine-rich repeat receptor-like protein kinase genes in Arabidopsis thaliana.</title>
        <authorList>
            <person name="Gou X."/>
            <person name="He K."/>
            <person name="Yang H."/>
            <person name="Yuan T."/>
            <person name="Lin H."/>
            <person name="Clouse S.D."/>
            <person name="Li J."/>
        </authorList>
    </citation>
    <scope>NUCLEOTIDE SEQUENCE [LARGE SCALE MRNA]</scope>
    <source>
        <strain>cv. Columbia</strain>
    </source>
</reference>
<reference key="5">
    <citation type="submission" date="2006-07" db="EMBL/GenBank/DDBJ databases">
        <title>Large-scale analysis of RIKEN Arabidopsis full-length (RAFL) cDNAs.</title>
        <authorList>
            <person name="Totoki Y."/>
            <person name="Seki M."/>
            <person name="Ishida J."/>
            <person name="Nakajima M."/>
            <person name="Enju A."/>
            <person name="Kamiya A."/>
            <person name="Narusaka M."/>
            <person name="Shin-i T."/>
            <person name="Nakagawa M."/>
            <person name="Sakamoto N."/>
            <person name="Oishi K."/>
            <person name="Kohara Y."/>
            <person name="Kobayashi M."/>
            <person name="Toyoda A."/>
            <person name="Sakaki Y."/>
            <person name="Sakurai T."/>
            <person name="Iida K."/>
            <person name="Akiyama K."/>
            <person name="Satou M."/>
            <person name="Toyoda T."/>
            <person name="Konagaya A."/>
            <person name="Carninci P."/>
            <person name="Kawai J."/>
            <person name="Hayashizaki Y."/>
            <person name="Shinozaki K."/>
        </authorList>
    </citation>
    <scope>NUCLEOTIDE SEQUENCE [LARGE SCALE MRNA]</scope>
    <source>
        <strain>cv. Columbia</strain>
    </source>
</reference>
<accession>Q84MA9</accession>
<accession>O22701</accession>
<comment type="subcellular location">
    <subcellularLocation>
        <location evidence="1">Cell membrane</location>
        <topology evidence="1">Single-pass type I membrane protein</topology>
    </subcellularLocation>
</comment>
<comment type="domain">
    <text>The protein kinase domain is predicted to be catalytically inactive.</text>
</comment>
<comment type="similarity">
    <text evidence="6">Belongs to the protein kinase superfamily. Ser/Thr protein kinase family.</text>
</comment>
<comment type="sequence caution" evidence="8">
    <conflict type="erroneous initiation">
        <sequence resource="EMBL-CDS" id="AAB71975"/>
    </conflict>
    <text>Truncated N-terminus.</text>
</comment>
<evidence type="ECO:0000250" key="1"/>
<evidence type="ECO:0000250" key="2">
    <source>
        <dbReference type="UniProtKB" id="Q94AG2"/>
    </source>
</evidence>
<evidence type="ECO:0000250" key="3">
    <source>
        <dbReference type="UniProtKB" id="Q94F62"/>
    </source>
</evidence>
<evidence type="ECO:0000250" key="4">
    <source>
        <dbReference type="UniProtKB" id="Q9LSI9"/>
    </source>
</evidence>
<evidence type="ECO:0000255" key="5"/>
<evidence type="ECO:0000255" key="6">
    <source>
        <dbReference type="PROSITE-ProRule" id="PRU00159"/>
    </source>
</evidence>
<evidence type="ECO:0000256" key="7">
    <source>
        <dbReference type="SAM" id="MobiDB-lite"/>
    </source>
</evidence>
<evidence type="ECO:0000305" key="8"/>
<dbReference type="EMBL" id="AC002292">
    <property type="protein sequence ID" value="AAB71975.1"/>
    <property type="status" value="ALT_INIT"/>
    <property type="molecule type" value="Genomic_DNA"/>
</dbReference>
<dbReference type="EMBL" id="CP002684">
    <property type="protein sequence ID" value="AEE33708.1"/>
    <property type="molecule type" value="Genomic_DNA"/>
</dbReference>
<dbReference type="EMBL" id="BT006440">
    <property type="protein sequence ID" value="AAP21248.1"/>
    <property type="molecule type" value="mRNA"/>
</dbReference>
<dbReference type="EMBL" id="FJ708665">
    <property type="protein sequence ID" value="ACN59260.1"/>
    <property type="molecule type" value="mRNA"/>
</dbReference>
<dbReference type="EMBL" id="AK227473">
    <property type="protein sequence ID" value="BAE99475.1"/>
    <property type="molecule type" value="mRNA"/>
</dbReference>
<dbReference type="PIR" id="E96631">
    <property type="entry name" value="E96631"/>
</dbReference>
<dbReference type="RefSeq" id="NP_176262.2">
    <property type="nucleotide sequence ID" value="NM_104746.3"/>
</dbReference>
<dbReference type="SMR" id="Q84MA9"/>
<dbReference type="BioGRID" id="27581">
    <property type="interactions" value="22"/>
</dbReference>
<dbReference type="FunCoup" id="Q84MA9">
    <property type="interactions" value="699"/>
</dbReference>
<dbReference type="IntAct" id="Q84MA9">
    <property type="interactions" value="22"/>
</dbReference>
<dbReference type="STRING" id="3702.Q84MA9"/>
<dbReference type="GlyGen" id="Q84MA9">
    <property type="glycosylation" value="8 sites"/>
</dbReference>
<dbReference type="iPTMnet" id="Q84MA9"/>
<dbReference type="PaxDb" id="3702-AT1G60630.1"/>
<dbReference type="ProteomicsDB" id="234617"/>
<dbReference type="EnsemblPlants" id="AT1G60630.1">
    <property type="protein sequence ID" value="AT1G60630.1"/>
    <property type="gene ID" value="AT1G60630"/>
</dbReference>
<dbReference type="GeneID" id="842357"/>
<dbReference type="Gramene" id="AT1G60630.1">
    <property type="protein sequence ID" value="AT1G60630.1"/>
    <property type="gene ID" value="AT1G60630"/>
</dbReference>
<dbReference type="KEGG" id="ath:AT1G60630"/>
<dbReference type="Araport" id="AT1G60630"/>
<dbReference type="TAIR" id="AT1G60630"/>
<dbReference type="eggNOG" id="ENOG502QTF1">
    <property type="taxonomic scope" value="Eukaryota"/>
</dbReference>
<dbReference type="HOGENOM" id="CLU_000288_92_6_1"/>
<dbReference type="InParanoid" id="Q84MA9"/>
<dbReference type="OMA" id="PREDHMS"/>
<dbReference type="PhylomeDB" id="Q84MA9"/>
<dbReference type="PRO" id="PR:Q84MA9"/>
<dbReference type="Proteomes" id="UP000006548">
    <property type="component" value="Chromosome 1"/>
</dbReference>
<dbReference type="ExpressionAtlas" id="Q84MA9">
    <property type="expression patterns" value="baseline and differential"/>
</dbReference>
<dbReference type="GO" id="GO:0005886">
    <property type="term" value="C:plasma membrane"/>
    <property type="evidence" value="ECO:0007669"/>
    <property type="project" value="UniProtKB-SubCell"/>
</dbReference>
<dbReference type="GO" id="GO:0005524">
    <property type="term" value="F:ATP binding"/>
    <property type="evidence" value="ECO:0007669"/>
    <property type="project" value="UniProtKB-KW"/>
</dbReference>
<dbReference type="GO" id="GO:0004672">
    <property type="term" value="F:protein kinase activity"/>
    <property type="evidence" value="ECO:0007669"/>
    <property type="project" value="InterPro"/>
</dbReference>
<dbReference type="FunFam" id="3.80.10.10:FF:000400">
    <property type="entry name" value="Nuclear pore complex protein NUP107"/>
    <property type="match status" value="1"/>
</dbReference>
<dbReference type="Gene3D" id="3.30.200.20">
    <property type="entry name" value="Phosphorylase Kinase, domain 1"/>
    <property type="match status" value="1"/>
</dbReference>
<dbReference type="Gene3D" id="3.80.10.10">
    <property type="entry name" value="Ribonuclease Inhibitor"/>
    <property type="match status" value="2"/>
</dbReference>
<dbReference type="Gene3D" id="1.10.510.10">
    <property type="entry name" value="Transferase(Phosphotransferase) domain 1"/>
    <property type="match status" value="1"/>
</dbReference>
<dbReference type="InterPro" id="IPR011009">
    <property type="entry name" value="Kinase-like_dom_sf"/>
</dbReference>
<dbReference type="InterPro" id="IPR001611">
    <property type="entry name" value="Leu-rich_rpt"/>
</dbReference>
<dbReference type="InterPro" id="IPR025875">
    <property type="entry name" value="Leu-rich_rpt_4"/>
</dbReference>
<dbReference type="InterPro" id="IPR032675">
    <property type="entry name" value="LRR_dom_sf"/>
</dbReference>
<dbReference type="InterPro" id="IPR013210">
    <property type="entry name" value="LRR_N_plant-typ"/>
</dbReference>
<dbReference type="InterPro" id="IPR046959">
    <property type="entry name" value="PRK1-6/SRF4-like"/>
</dbReference>
<dbReference type="InterPro" id="IPR000719">
    <property type="entry name" value="Prot_kinase_dom"/>
</dbReference>
<dbReference type="InterPro" id="IPR049328">
    <property type="entry name" value="TM_ErbB1"/>
</dbReference>
<dbReference type="PANTHER" id="PTHR48007">
    <property type="entry name" value="LEUCINE-RICH REPEAT RECEPTOR-LIKE PROTEIN KINASE PXC1"/>
    <property type="match status" value="1"/>
</dbReference>
<dbReference type="PANTHER" id="PTHR48007:SF39">
    <property type="entry name" value="PROTEIN KINASE DOMAIN-CONTAINING PROTEIN"/>
    <property type="match status" value="1"/>
</dbReference>
<dbReference type="Pfam" id="PF00560">
    <property type="entry name" value="LRR_1"/>
    <property type="match status" value="2"/>
</dbReference>
<dbReference type="Pfam" id="PF12799">
    <property type="entry name" value="LRR_4"/>
    <property type="match status" value="1"/>
</dbReference>
<dbReference type="Pfam" id="PF08263">
    <property type="entry name" value="LRRNT_2"/>
    <property type="match status" value="1"/>
</dbReference>
<dbReference type="Pfam" id="PF00069">
    <property type="entry name" value="Pkinase"/>
    <property type="match status" value="1"/>
</dbReference>
<dbReference type="Pfam" id="PF21314">
    <property type="entry name" value="TM_ErbB1"/>
    <property type="match status" value="1"/>
</dbReference>
<dbReference type="SUPFAM" id="SSF52058">
    <property type="entry name" value="L domain-like"/>
    <property type="match status" value="1"/>
</dbReference>
<dbReference type="SUPFAM" id="SSF56112">
    <property type="entry name" value="Protein kinase-like (PK-like)"/>
    <property type="match status" value="1"/>
</dbReference>
<dbReference type="PROSITE" id="PS50011">
    <property type="entry name" value="PROTEIN_KINASE_DOM"/>
    <property type="match status" value="1"/>
</dbReference>
<protein>
    <recommendedName>
        <fullName>Inactive leucine-rich repeat receptor-like serine/threonine-protein kinase At1g60630</fullName>
    </recommendedName>
</protein>
<organism>
    <name type="scientific">Arabidopsis thaliana</name>
    <name type="common">Mouse-ear cress</name>
    <dbReference type="NCBI Taxonomy" id="3702"/>
    <lineage>
        <taxon>Eukaryota</taxon>
        <taxon>Viridiplantae</taxon>
        <taxon>Streptophyta</taxon>
        <taxon>Embryophyta</taxon>
        <taxon>Tracheophyta</taxon>
        <taxon>Spermatophyta</taxon>
        <taxon>Magnoliopsida</taxon>
        <taxon>eudicotyledons</taxon>
        <taxon>Gunneridae</taxon>
        <taxon>Pentapetalae</taxon>
        <taxon>rosids</taxon>
        <taxon>malvids</taxon>
        <taxon>Brassicales</taxon>
        <taxon>Brassicaceae</taxon>
        <taxon>Camelineae</taxon>
        <taxon>Arabidopsis</taxon>
    </lineage>
</organism>
<gene>
    <name type="ordered locus">At1g60630</name>
    <name type="ORF">F8A5.15</name>
</gene>
<name>Y1063_ARATH</name>
<feature type="signal peptide" evidence="5">
    <location>
        <begin position="1"/>
        <end position="23"/>
    </location>
</feature>
<feature type="chain" id="PRO_0000403335" description="Inactive leucine-rich repeat receptor-like serine/threonine-protein kinase At1g60630">
    <location>
        <begin position="24"/>
        <end position="652"/>
    </location>
</feature>
<feature type="topological domain" description="Extracellular" evidence="5">
    <location>
        <begin position="24"/>
        <end position="256"/>
    </location>
</feature>
<feature type="transmembrane region" description="Helical" evidence="5">
    <location>
        <begin position="257"/>
        <end position="277"/>
    </location>
</feature>
<feature type="topological domain" description="Cytoplasmic" evidence="5">
    <location>
        <begin position="278"/>
        <end position="652"/>
    </location>
</feature>
<feature type="repeat" description="LRR 1">
    <location>
        <begin position="64"/>
        <end position="84"/>
    </location>
</feature>
<feature type="repeat" description="LRR 2">
    <location>
        <begin position="85"/>
        <end position="108"/>
    </location>
</feature>
<feature type="repeat" description="LRR 3">
    <location>
        <begin position="109"/>
        <end position="132"/>
    </location>
</feature>
<feature type="repeat" description="LRR 4">
    <location>
        <begin position="134"/>
        <end position="156"/>
    </location>
</feature>
<feature type="repeat" description="LRR 5">
    <location>
        <begin position="158"/>
        <end position="178"/>
    </location>
</feature>
<feature type="repeat" description="LRR 6">
    <location>
        <begin position="179"/>
        <end position="203"/>
    </location>
</feature>
<feature type="domain" description="Protein kinase" evidence="6">
    <location>
        <begin position="350"/>
        <end position="624"/>
    </location>
</feature>
<feature type="region of interest" description="Disordered" evidence="7">
    <location>
        <begin position="286"/>
        <end position="321"/>
    </location>
</feature>
<feature type="region of interest" description="Disordered" evidence="7">
    <location>
        <begin position="630"/>
        <end position="652"/>
    </location>
</feature>
<feature type="binding site" evidence="6">
    <location>
        <begin position="356"/>
        <end position="364"/>
    </location>
    <ligand>
        <name>ATP</name>
        <dbReference type="ChEBI" id="CHEBI:30616"/>
    </ligand>
</feature>
<feature type="binding site" evidence="6">
    <location>
        <position position="378"/>
    </location>
    <ligand>
        <name>ATP</name>
        <dbReference type="ChEBI" id="CHEBI:30616"/>
    </ligand>
</feature>
<feature type="modified residue" description="Phosphoserine" evidence="3">
    <location>
        <position position="352"/>
    </location>
</feature>
<feature type="modified residue" description="Phosphoserine" evidence="2">
    <location>
        <position position="430"/>
    </location>
</feature>
<feature type="modified residue" description="Phosphoserine" evidence="4">
    <location>
        <position position="433"/>
    </location>
</feature>
<feature type="modified residue" description="Phosphothreonine" evidence="3">
    <location>
        <position position="509"/>
    </location>
</feature>
<feature type="glycosylation site" description="N-linked (GlcNAc...) asparagine" evidence="5">
    <location>
        <position position="72"/>
    </location>
</feature>
<feature type="glycosylation site" description="N-linked (GlcNAc...) asparagine" evidence="5">
    <location>
        <position position="104"/>
    </location>
</feature>
<feature type="glycosylation site" description="N-linked (GlcNAc...) asparagine" evidence="5">
    <location>
        <position position="120"/>
    </location>
</feature>
<feature type="glycosylation site" description="N-linked (GlcNAc...) asparagine" evidence="5">
    <location>
        <position position="185"/>
    </location>
</feature>
<feature type="glycosylation site" description="N-linked (GlcNAc...) asparagine" evidence="5">
    <location>
        <position position="205"/>
    </location>
</feature>
<feature type="glycosylation site" description="N-linked (GlcNAc...) asparagine" evidence="5">
    <location>
        <position position="225"/>
    </location>
</feature>
<sequence length="652" mass="72374">MISSSSCMFFLVFAFFLISPVRSSDVEALLSLKSSIDPSNSIPWRGTDPCNWEGVKKCMKGRVSKLVLENLNLSGSLNGKSLNQLDQLRVLSFKGNSLSGSIPNLSGLVNLKSLYLNDNNFSGEFPESLTSLHRLKTVVLSRNRFSGKIPSSLLRLSRLYTFYVQDNLFSGSIPPLNQATLRFFNVSNNQLSGHIPPTQALNRFNESSFTDNIALCGDQIQNSCNDTTGITSTPSAKPAIPVAKTRSRTKLIGIISGSICGGILILLLTFLLICLLWRRKRSKSKREERRSKRVAESKEAKTAETEEGTSDQKNKRFSWEKESEEGSVGTLVFLGRDITVVRYTMDDLLKASAETLGRGTLGSTYKAVMESGFIITVKRLKDAGFPRMDEFKRHIEILGRLKHPNLVPLRAYFQAKEECLLVYDYFPNGSLFSLIHGSKVSGSGKPLHWTSCLKIAEDLAMGLVYIHQNPGLTHGNLKSSNVLLGPDFESCLTDYGLSDLHDPYSIEDTSAASLFYKAPECRDLRKASTQPADVYSFGVLLLELLTGRTSFKDLVHKYGSDISTWVRAVREEETEVSEELNASEEKLQALLTIATACVAVKPENRPAMREVLKMVKDARAEAALFSFNSSDHSPGRWSDTIQSLPREDHMSI</sequence>